<organism>
    <name type="scientific">Halothermothrix orenii (strain H 168 / OCM 544 / DSM 9562)</name>
    <dbReference type="NCBI Taxonomy" id="373903"/>
    <lineage>
        <taxon>Bacteria</taxon>
        <taxon>Bacillati</taxon>
        <taxon>Bacillota</taxon>
        <taxon>Clostridia</taxon>
        <taxon>Halanaerobiales</taxon>
        <taxon>Halothermotrichaceae</taxon>
        <taxon>Halothermothrix</taxon>
    </lineage>
</organism>
<sequence length="349" mass="39109">MSLKDLINKNLSHWVAGQGPERDIVLSSRIRLARNLDTIPYPNRADKDSKEEVTKRVLDATSKQGKIKLHYIKMDDLPEVEREVLVEKHLISPAHAKAGEGKGVLLNDNETISIMINEEDHLRLQVLIPGLQLEGAWETASELDDLLEEKLDFAFSQKWGYLSACPTNVGTGLRASVMVHLPALNLTNNINKMLGAISKVGLTVRGIYGEGSEYVGNLYQISNQVTLGHTEKEIIANLKSVTSQIIEQERQARNLLLKEKEIEVRDRVNRSFGILSHAYQISSEEALRMLSNVKLGIDMGIITDVDTGVLSELMVLIRPAHLQKLEGKELTPTERDIKRAELIKTRLNM</sequence>
<accession>B8D093</accession>
<evidence type="ECO:0000255" key="1">
    <source>
        <dbReference type="HAMAP-Rule" id="MF_00602"/>
    </source>
</evidence>
<feature type="chain" id="PRO_1000147062" description="Protein-arginine kinase">
    <location>
        <begin position="1"/>
        <end position="349"/>
    </location>
</feature>
<feature type="domain" description="Phosphagen kinase C-terminal" evidence="1">
    <location>
        <begin position="24"/>
        <end position="252"/>
    </location>
</feature>
<feature type="short sequence motif" description="RDXXRA motif of the pArg binding pocket involved in allosteric regulation" evidence="1">
    <location>
        <begin position="335"/>
        <end position="340"/>
    </location>
</feature>
<feature type="binding site" evidence="1">
    <location>
        <begin position="27"/>
        <end position="31"/>
    </location>
    <ligand>
        <name>ATP</name>
        <dbReference type="ChEBI" id="CHEBI:30616"/>
    </ligand>
</feature>
<feature type="binding site" evidence="1">
    <location>
        <position position="89"/>
    </location>
    <ligand>
        <name>ATP</name>
        <dbReference type="ChEBI" id="CHEBI:30616"/>
    </ligand>
</feature>
<feature type="binding site" evidence="1">
    <location>
        <position position="123"/>
    </location>
    <ligand>
        <name>ATP</name>
        <dbReference type="ChEBI" id="CHEBI:30616"/>
    </ligand>
</feature>
<feature type="binding site" evidence="1">
    <location>
        <begin position="174"/>
        <end position="178"/>
    </location>
    <ligand>
        <name>ATP</name>
        <dbReference type="ChEBI" id="CHEBI:30616"/>
    </ligand>
</feature>
<feature type="binding site" evidence="1">
    <location>
        <begin position="205"/>
        <end position="210"/>
    </location>
    <ligand>
        <name>ATP</name>
        <dbReference type="ChEBI" id="CHEBI:30616"/>
    </ligand>
</feature>
<proteinExistence type="inferred from homology"/>
<reference key="1">
    <citation type="journal article" date="2009" name="PLoS ONE">
        <title>Genome analysis of the anaerobic thermohalophilic bacterium Halothermothrix orenii.</title>
        <authorList>
            <person name="Mavromatis K."/>
            <person name="Ivanova N."/>
            <person name="Anderson I."/>
            <person name="Lykidis A."/>
            <person name="Hooper S.D."/>
            <person name="Sun H."/>
            <person name="Kunin V."/>
            <person name="Lapidus A."/>
            <person name="Hugenholtz P."/>
            <person name="Patel B."/>
            <person name="Kyrpides N.C."/>
        </authorList>
    </citation>
    <scope>NUCLEOTIDE SEQUENCE [LARGE SCALE GENOMIC DNA]</scope>
    <source>
        <strain>H 168 / OCM 544 / DSM 9562</strain>
    </source>
</reference>
<keyword id="KW-0021">Allosteric enzyme</keyword>
<keyword id="KW-0067">ATP-binding</keyword>
<keyword id="KW-0418">Kinase</keyword>
<keyword id="KW-0547">Nucleotide-binding</keyword>
<keyword id="KW-1185">Reference proteome</keyword>
<keyword id="KW-0808">Transferase</keyword>
<comment type="function">
    <text evidence="1">Catalyzes the specific phosphorylation of arginine residues in proteins.</text>
</comment>
<comment type="catalytic activity">
    <reaction evidence="1">
        <text>L-arginyl-[protein] + ATP = N(omega)-phospho-L-arginyl-[protein] + ADP + H(+)</text>
        <dbReference type="Rhea" id="RHEA:43384"/>
        <dbReference type="Rhea" id="RHEA-COMP:10532"/>
        <dbReference type="Rhea" id="RHEA-COMP:10533"/>
        <dbReference type="ChEBI" id="CHEBI:15378"/>
        <dbReference type="ChEBI" id="CHEBI:29965"/>
        <dbReference type="ChEBI" id="CHEBI:30616"/>
        <dbReference type="ChEBI" id="CHEBI:83226"/>
        <dbReference type="ChEBI" id="CHEBI:456216"/>
        <dbReference type="EC" id="2.7.14.1"/>
    </reaction>
</comment>
<comment type="activity regulation">
    <text evidence="1">Appears to be allosterically activated by the binding of pArg-containing polypeptides to the pArg-binding pocket localized in the C-terminal domain of McsB.</text>
</comment>
<comment type="similarity">
    <text evidence="1">Belongs to the ATP:guanido phosphotransferase family.</text>
</comment>
<name>MCSB_HALOH</name>
<gene>
    <name evidence="1" type="primary">mcsB</name>
    <name type="ordered locus">Hore_00860</name>
</gene>
<dbReference type="EC" id="2.7.14.1" evidence="1"/>
<dbReference type="EMBL" id="CP001098">
    <property type="protein sequence ID" value="ACL68847.1"/>
    <property type="molecule type" value="Genomic_DNA"/>
</dbReference>
<dbReference type="RefSeq" id="WP_012635046.1">
    <property type="nucleotide sequence ID" value="NC_011899.1"/>
</dbReference>
<dbReference type="SMR" id="B8D093"/>
<dbReference type="STRING" id="373903.Hore_00860"/>
<dbReference type="KEGG" id="hor:Hore_00860"/>
<dbReference type="eggNOG" id="COG3869">
    <property type="taxonomic scope" value="Bacteria"/>
</dbReference>
<dbReference type="HOGENOM" id="CLU_066591_1_0_9"/>
<dbReference type="OrthoDB" id="9791353at2"/>
<dbReference type="Proteomes" id="UP000000719">
    <property type="component" value="Chromosome"/>
</dbReference>
<dbReference type="GO" id="GO:0005615">
    <property type="term" value="C:extracellular space"/>
    <property type="evidence" value="ECO:0007669"/>
    <property type="project" value="TreeGrafter"/>
</dbReference>
<dbReference type="GO" id="GO:0005524">
    <property type="term" value="F:ATP binding"/>
    <property type="evidence" value="ECO:0007669"/>
    <property type="project" value="UniProtKB-KW"/>
</dbReference>
<dbReference type="GO" id="GO:0004111">
    <property type="term" value="F:creatine kinase activity"/>
    <property type="evidence" value="ECO:0007669"/>
    <property type="project" value="InterPro"/>
</dbReference>
<dbReference type="GO" id="GO:0004672">
    <property type="term" value="F:protein kinase activity"/>
    <property type="evidence" value="ECO:0007669"/>
    <property type="project" value="UniProtKB-UniRule"/>
</dbReference>
<dbReference type="GO" id="GO:0046314">
    <property type="term" value="P:phosphocreatine biosynthetic process"/>
    <property type="evidence" value="ECO:0007669"/>
    <property type="project" value="InterPro"/>
</dbReference>
<dbReference type="CDD" id="cd07930">
    <property type="entry name" value="bacterial_phosphagen_kinase"/>
    <property type="match status" value="1"/>
</dbReference>
<dbReference type="FunFam" id="3.30.590.10:FF:000007">
    <property type="entry name" value="Protein-arginine kinase"/>
    <property type="match status" value="1"/>
</dbReference>
<dbReference type="Gene3D" id="3.30.590.10">
    <property type="entry name" value="Glutamine synthetase/guanido kinase, catalytic domain"/>
    <property type="match status" value="1"/>
</dbReference>
<dbReference type="HAMAP" id="MF_00602">
    <property type="entry name" value="Prot_Arg_kinase"/>
    <property type="match status" value="1"/>
</dbReference>
<dbReference type="InterPro" id="IPR023660">
    <property type="entry name" value="Arg_Kinase"/>
</dbReference>
<dbReference type="InterPro" id="IPR000749">
    <property type="entry name" value="ATP-guanido_PTrfase"/>
</dbReference>
<dbReference type="InterPro" id="IPR022415">
    <property type="entry name" value="ATP-guanido_PTrfase_AS"/>
</dbReference>
<dbReference type="InterPro" id="IPR022414">
    <property type="entry name" value="ATP-guanido_PTrfase_cat"/>
</dbReference>
<dbReference type="InterPro" id="IPR014746">
    <property type="entry name" value="Gln_synth/guanido_kin_cat_dom"/>
</dbReference>
<dbReference type="NCBIfam" id="NF002194">
    <property type="entry name" value="PRK01059.1-4"/>
    <property type="match status" value="1"/>
</dbReference>
<dbReference type="PANTHER" id="PTHR11547:SF38">
    <property type="entry name" value="ARGININE KINASE 1-RELATED"/>
    <property type="match status" value="1"/>
</dbReference>
<dbReference type="PANTHER" id="PTHR11547">
    <property type="entry name" value="ARGININE OR CREATINE KINASE"/>
    <property type="match status" value="1"/>
</dbReference>
<dbReference type="Pfam" id="PF00217">
    <property type="entry name" value="ATP-gua_Ptrans"/>
    <property type="match status" value="1"/>
</dbReference>
<dbReference type="SUPFAM" id="SSF55931">
    <property type="entry name" value="Glutamine synthetase/guanido kinase"/>
    <property type="match status" value="1"/>
</dbReference>
<dbReference type="PROSITE" id="PS00112">
    <property type="entry name" value="PHOSPHAGEN_KINASE"/>
    <property type="match status" value="1"/>
</dbReference>
<dbReference type="PROSITE" id="PS51510">
    <property type="entry name" value="PHOSPHAGEN_KINASE_C"/>
    <property type="match status" value="1"/>
</dbReference>
<protein>
    <recommendedName>
        <fullName evidence="1">Protein-arginine kinase</fullName>
        <ecNumber evidence="1">2.7.14.1</ecNumber>
    </recommendedName>
</protein>